<protein>
    <recommendedName>
        <fullName>Thioredoxin</fullName>
        <shortName>Trx</shortName>
    </recommendedName>
</protein>
<dbReference type="EMBL" id="AF321769">
    <property type="protein sequence ID" value="AAK09384.1"/>
    <property type="molecule type" value="mRNA"/>
</dbReference>
<dbReference type="SMR" id="Q98TX1"/>
<dbReference type="TopDownProteomics" id="Q98TX1"/>
<dbReference type="GO" id="GO:0005737">
    <property type="term" value="C:cytoplasm"/>
    <property type="evidence" value="ECO:0007669"/>
    <property type="project" value="UniProtKB-SubCell"/>
</dbReference>
<dbReference type="GO" id="GO:0005576">
    <property type="term" value="C:extracellular region"/>
    <property type="evidence" value="ECO:0007669"/>
    <property type="project" value="UniProtKB-SubCell"/>
</dbReference>
<dbReference type="GO" id="GO:0005634">
    <property type="term" value="C:nucleus"/>
    <property type="evidence" value="ECO:0007669"/>
    <property type="project" value="UniProtKB-SubCell"/>
</dbReference>
<dbReference type="GO" id="GO:0015035">
    <property type="term" value="F:protein-disulfide reductase activity"/>
    <property type="evidence" value="ECO:0007669"/>
    <property type="project" value="InterPro"/>
</dbReference>
<dbReference type="GO" id="GO:0043388">
    <property type="term" value="P:positive regulation of DNA binding"/>
    <property type="evidence" value="ECO:0000250"/>
    <property type="project" value="UniProtKB"/>
</dbReference>
<dbReference type="GO" id="GO:0009314">
    <property type="term" value="P:response to radiation"/>
    <property type="evidence" value="ECO:0000250"/>
    <property type="project" value="UniProtKB"/>
</dbReference>
<dbReference type="CDD" id="cd02947">
    <property type="entry name" value="TRX_family"/>
    <property type="match status" value="1"/>
</dbReference>
<dbReference type="FunFam" id="3.40.30.10:FF:000130">
    <property type="entry name" value="Thioredoxin"/>
    <property type="match status" value="1"/>
</dbReference>
<dbReference type="Gene3D" id="3.40.30.10">
    <property type="entry name" value="Glutaredoxin"/>
    <property type="match status" value="1"/>
</dbReference>
<dbReference type="InterPro" id="IPR005746">
    <property type="entry name" value="Thioredoxin"/>
</dbReference>
<dbReference type="InterPro" id="IPR036249">
    <property type="entry name" value="Thioredoxin-like_sf"/>
</dbReference>
<dbReference type="InterPro" id="IPR017937">
    <property type="entry name" value="Thioredoxin_CS"/>
</dbReference>
<dbReference type="InterPro" id="IPR013766">
    <property type="entry name" value="Thioredoxin_domain"/>
</dbReference>
<dbReference type="PANTHER" id="PTHR46115">
    <property type="entry name" value="THIOREDOXIN-LIKE PROTEIN 1"/>
    <property type="match status" value="1"/>
</dbReference>
<dbReference type="Pfam" id="PF00085">
    <property type="entry name" value="Thioredoxin"/>
    <property type="match status" value="1"/>
</dbReference>
<dbReference type="PIRSF" id="PIRSF000077">
    <property type="entry name" value="Thioredoxin"/>
    <property type="match status" value="1"/>
</dbReference>
<dbReference type="PRINTS" id="PR00421">
    <property type="entry name" value="THIOREDOXIN"/>
</dbReference>
<dbReference type="SUPFAM" id="SSF52833">
    <property type="entry name" value="Thioredoxin-like"/>
    <property type="match status" value="1"/>
</dbReference>
<dbReference type="PROSITE" id="PS00194">
    <property type="entry name" value="THIOREDOXIN_1"/>
    <property type="match status" value="1"/>
</dbReference>
<dbReference type="PROSITE" id="PS51352">
    <property type="entry name" value="THIOREDOXIN_2"/>
    <property type="match status" value="1"/>
</dbReference>
<gene>
    <name type="primary">TXN</name>
</gene>
<evidence type="ECO:0000250" key="1"/>
<evidence type="ECO:0000250" key="2">
    <source>
        <dbReference type="UniProtKB" id="P10599"/>
    </source>
</evidence>
<evidence type="ECO:0000250" key="3">
    <source>
        <dbReference type="UniProtKB" id="Q811S9"/>
    </source>
</evidence>
<evidence type="ECO:0000255" key="4">
    <source>
        <dbReference type="PROSITE-ProRule" id="PRU00691"/>
    </source>
</evidence>
<evidence type="ECO:0000305" key="5"/>
<accession>Q98TX1</accession>
<name>THIO_OPHHA</name>
<comment type="function">
    <text evidence="1">Participates in various redox reactions through the reversible oxidation of its active center dithiol to a disulfide and catalyzes dithiol-disulfide exchange reactions (By similarity). Plays a role in the reversible S-nitrosylation of cysteine residues in target proteins, and thereby contributes to the response to intracellular nitric oxide. Nitrosylates the active site Cys of CASP3 in response to nitric oxide (NO), and thereby inhibits caspase-3 activity. Induces the FOS/JUN AP-1 DNA binding activity in ionizing radiation (IR) cells through its oxidation/reduction status and stimulates AP-1 transcriptional activity (By similarity).</text>
</comment>
<comment type="subcellular location">
    <subcellularLocation>
        <location evidence="2">Nucleus</location>
    </subcellularLocation>
    <subcellularLocation>
        <location evidence="2">Cytoplasm</location>
    </subcellularLocation>
    <subcellularLocation>
        <location evidence="2">Secreted</location>
    </subcellularLocation>
    <text evidence="3">Shuttles between the nucleus and nucleolus.</text>
</comment>
<comment type="PTM">
    <text evidence="1">May be nitrosylated on several cysteine residues, depending on the oxidation state. Nitrosylated Cys-73 may serve as donor for nitrosylation of target proteins (By similarity).</text>
</comment>
<comment type="similarity">
    <text evidence="5">Belongs to the thioredoxin family.</text>
</comment>
<sequence length="105" mass="12003">MVKIVGDLTEFRAELSNAGSKLIVVDFSATWCGPCKMIKPFFHSMVEKYPDVVFIEIDVDDAQDVASHCDVKCMPTFQFYKNNEKVHEFSGANKEKLEEAIKKYM</sequence>
<reference key="1">
    <citation type="submission" date="2000-11" db="EMBL/GenBank/DDBJ databases">
        <title>cDNA sequence of Ophiophagus hannah venom gland thioredoxin protein.</title>
        <authorList>
            <person name="Lee W."/>
            <person name="Liu H."/>
            <person name="Zhang Y."/>
        </authorList>
    </citation>
    <scope>NUCLEOTIDE SEQUENCE [MRNA]</scope>
    <source>
        <tissue>Venom gland</tissue>
    </source>
</reference>
<keyword id="KW-0010">Activator</keyword>
<keyword id="KW-0963">Cytoplasm</keyword>
<keyword id="KW-1015">Disulfide bond</keyword>
<keyword id="KW-0249">Electron transport</keyword>
<keyword id="KW-0539">Nucleus</keyword>
<keyword id="KW-0676">Redox-active center</keyword>
<keyword id="KW-0702">S-nitrosylation</keyword>
<keyword id="KW-0964">Secreted</keyword>
<keyword id="KW-0804">Transcription</keyword>
<keyword id="KW-0805">Transcription regulation</keyword>
<keyword id="KW-0813">Transport</keyword>
<feature type="initiator methionine" description="Removed" evidence="1">
    <location>
        <position position="1"/>
    </location>
</feature>
<feature type="chain" id="PRO_0000120014" description="Thioredoxin">
    <location>
        <begin position="2"/>
        <end position="105"/>
    </location>
</feature>
<feature type="domain" description="Thioredoxin" evidence="4">
    <location>
        <begin position="2"/>
        <end position="105"/>
    </location>
</feature>
<feature type="active site" description="Nucleophile" evidence="1">
    <location>
        <position position="32"/>
    </location>
</feature>
<feature type="active site" description="Nucleophile" evidence="1">
    <location>
        <position position="35"/>
    </location>
</feature>
<feature type="site" description="Deprotonates C-terminal active site Cys" evidence="1">
    <location>
        <position position="26"/>
    </location>
</feature>
<feature type="site" description="Contributes to redox potential value" evidence="1">
    <location>
        <position position="33"/>
    </location>
</feature>
<feature type="site" description="Contributes to redox potential value" evidence="1">
    <location>
        <position position="34"/>
    </location>
</feature>
<feature type="modified residue" description="S-nitrosocysteine" evidence="1">
    <location>
        <position position="69"/>
    </location>
</feature>
<feature type="modified residue" description="S-nitrosocysteine" evidence="1">
    <location>
        <position position="73"/>
    </location>
</feature>
<feature type="disulfide bond" description="Redox-active" evidence="4">
    <location>
        <begin position="32"/>
        <end position="35"/>
    </location>
</feature>
<proteinExistence type="inferred from homology"/>
<organism>
    <name type="scientific">Ophiophagus hannah</name>
    <name type="common">King cobra</name>
    <name type="synonym">Naja hannah</name>
    <dbReference type="NCBI Taxonomy" id="8665"/>
    <lineage>
        <taxon>Eukaryota</taxon>
        <taxon>Metazoa</taxon>
        <taxon>Chordata</taxon>
        <taxon>Craniata</taxon>
        <taxon>Vertebrata</taxon>
        <taxon>Euteleostomi</taxon>
        <taxon>Lepidosauria</taxon>
        <taxon>Squamata</taxon>
        <taxon>Bifurcata</taxon>
        <taxon>Unidentata</taxon>
        <taxon>Episquamata</taxon>
        <taxon>Toxicofera</taxon>
        <taxon>Serpentes</taxon>
        <taxon>Colubroidea</taxon>
        <taxon>Elapidae</taxon>
        <taxon>Elapinae</taxon>
        <taxon>Ophiophagus</taxon>
    </lineage>
</organism>